<dbReference type="EC" id="1.17.7.3" evidence="1"/>
<dbReference type="EMBL" id="CP000319">
    <property type="protein sequence ID" value="ABE61508.1"/>
    <property type="molecule type" value="Genomic_DNA"/>
</dbReference>
<dbReference type="RefSeq" id="WP_011509212.1">
    <property type="nucleotide sequence ID" value="NC_007964.1"/>
</dbReference>
<dbReference type="SMR" id="Q1QQI9"/>
<dbReference type="STRING" id="323097.Nham_0620"/>
<dbReference type="KEGG" id="nha:Nham_0620"/>
<dbReference type="eggNOG" id="COG0821">
    <property type="taxonomic scope" value="Bacteria"/>
</dbReference>
<dbReference type="HOGENOM" id="CLU_042258_1_0_5"/>
<dbReference type="OrthoDB" id="9803214at2"/>
<dbReference type="UniPathway" id="UPA00056">
    <property type="reaction ID" value="UER00096"/>
</dbReference>
<dbReference type="Proteomes" id="UP000001953">
    <property type="component" value="Chromosome"/>
</dbReference>
<dbReference type="GO" id="GO:0051539">
    <property type="term" value="F:4 iron, 4 sulfur cluster binding"/>
    <property type="evidence" value="ECO:0007669"/>
    <property type="project" value="UniProtKB-UniRule"/>
</dbReference>
<dbReference type="GO" id="GO:0046429">
    <property type="term" value="F:4-hydroxy-3-methylbut-2-en-1-yl diphosphate synthase activity (ferredoxin)"/>
    <property type="evidence" value="ECO:0007669"/>
    <property type="project" value="UniProtKB-UniRule"/>
</dbReference>
<dbReference type="GO" id="GO:0141197">
    <property type="term" value="F:4-hydroxy-3-methylbut-2-enyl-diphosphate synthase activity (flavodoxin)"/>
    <property type="evidence" value="ECO:0007669"/>
    <property type="project" value="UniProtKB-EC"/>
</dbReference>
<dbReference type="GO" id="GO:0005506">
    <property type="term" value="F:iron ion binding"/>
    <property type="evidence" value="ECO:0007669"/>
    <property type="project" value="InterPro"/>
</dbReference>
<dbReference type="GO" id="GO:0019288">
    <property type="term" value="P:isopentenyl diphosphate biosynthetic process, methylerythritol 4-phosphate pathway"/>
    <property type="evidence" value="ECO:0007669"/>
    <property type="project" value="UniProtKB-UniRule"/>
</dbReference>
<dbReference type="GO" id="GO:0016114">
    <property type="term" value="P:terpenoid biosynthetic process"/>
    <property type="evidence" value="ECO:0007669"/>
    <property type="project" value="InterPro"/>
</dbReference>
<dbReference type="FunFam" id="3.30.413.10:FF:000012">
    <property type="entry name" value="4-hydroxy-3-methylbut-2-en-1-yl diphosphate synthase (flavodoxin)"/>
    <property type="match status" value="1"/>
</dbReference>
<dbReference type="Gene3D" id="3.20.20.20">
    <property type="entry name" value="Dihydropteroate synthase-like"/>
    <property type="match status" value="1"/>
</dbReference>
<dbReference type="Gene3D" id="3.30.413.10">
    <property type="entry name" value="Sulfite Reductase Hemoprotein, domain 1"/>
    <property type="match status" value="1"/>
</dbReference>
<dbReference type="HAMAP" id="MF_00159">
    <property type="entry name" value="IspG"/>
    <property type="match status" value="1"/>
</dbReference>
<dbReference type="InterPro" id="IPR011005">
    <property type="entry name" value="Dihydropteroate_synth-like_sf"/>
</dbReference>
<dbReference type="InterPro" id="IPR016425">
    <property type="entry name" value="IspG_bac"/>
</dbReference>
<dbReference type="InterPro" id="IPR004588">
    <property type="entry name" value="IspG_bac-typ"/>
</dbReference>
<dbReference type="InterPro" id="IPR045854">
    <property type="entry name" value="NO2/SO3_Rdtase_4Fe4S_sf"/>
</dbReference>
<dbReference type="NCBIfam" id="TIGR00612">
    <property type="entry name" value="ispG_gcpE"/>
    <property type="match status" value="1"/>
</dbReference>
<dbReference type="NCBIfam" id="NF001540">
    <property type="entry name" value="PRK00366.1"/>
    <property type="match status" value="1"/>
</dbReference>
<dbReference type="PANTHER" id="PTHR30454">
    <property type="entry name" value="4-HYDROXY-3-METHYLBUT-2-EN-1-YL DIPHOSPHATE SYNTHASE"/>
    <property type="match status" value="1"/>
</dbReference>
<dbReference type="PANTHER" id="PTHR30454:SF0">
    <property type="entry name" value="4-HYDROXY-3-METHYLBUT-2-EN-1-YL DIPHOSPHATE SYNTHASE (FERREDOXIN), CHLOROPLASTIC"/>
    <property type="match status" value="1"/>
</dbReference>
<dbReference type="Pfam" id="PF04551">
    <property type="entry name" value="GcpE"/>
    <property type="match status" value="1"/>
</dbReference>
<dbReference type="PIRSF" id="PIRSF004640">
    <property type="entry name" value="IspG"/>
    <property type="match status" value="1"/>
</dbReference>
<dbReference type="SUPFAM" id="SSF56014">
    <property type="entry name" value="Nitrite and sulphite reductase 4Fe-4S domain-like"/>
    <property type="match status" value="1"/>
</dbReference>
<keyword id="KW-0004">4Fe-4S</keyword>
<keyword id="KW-0408">Iron</keyword>
<keyword id="KW-0411">Iron-sulfur</keyword>
<keyword id="KW-0414">Isoprene biosynthesis</keyword>
<keyword id="KW-0479">Metal-binding</keyword>
<keyword id="KW-0560">Oxidoreductase</keyword>
<keyword id="KW-1185">Reference proteome</keyword>
<organism>
    <name type="scientific">Nitrobacter hamburgensis (strain DSM 10229 / NCIMB 13809 / X14)</name>
    <dbReference type="NCBI Taxonomy" id="323097"/>
    <lineage>
        <taxon>Bacteria</taxon>
        <taxon>Pseudomonadati</taxon>
        <taxon>Pseudomonadota</taxon>
        <taxon>Alphaproteobacteria</taxon>
        <taxon>Hyphomicrobiales</taxon>
        <taxon>Nitrobacteraceae</taxon>
        <taxon>Nitrobacter</taxon>
    </lineage>
</organism>
<sequence>MNKLENPSQRDVAGPSPRHKTTQVMVGSIAVGGGAPIVVQSMTNTDTADVEGTIAQVAALSRAGSEMVRITVDRDEAAAAVPHIRDGLRKRGIATPLIGDFHYIGHKLLADHPACAEALDKYRINPGNVGFKDKRDKQFTDIVEMAIKYGKAVRIGANWGSLDQELLTHLMEENANSAAPLEARAVTREAMVQSALLSAKRAEEIGLPKNRMILSAKVSAVQDLIAVYQTLASRSDYAIHLGLTEAGMGSKGIVASSAALGILLQQGIGDTIRISLTPEPGGDRTREVQVAQELLQTMGFRTFVPLVAACPGCGRTTSTTFQELARSIQDFIRDEMPGWKTQYPGVEQLNVAVMGCIVNGPGESKHADIGISLPGTGEAPAAPVFVDGKKFRTLRGPAIAQDFKALVIDYIDQRYGSGGKTPTDATTAAAE</sequence>
<reference key="1">
    <citation type="submission" date="2006-03" db="EMBL/GenBank/DDBJ databases">
        <title>Complete sequence of chromosome of Nitrobacter hamburgensis X14.</title>
        <authorList>
            <consortium name="US DOE Joint Genome Institute"/>
            <person name="Copeland A."/>
            <person name="Lucas S."/>
            <person name="Lapidus A."/>
            <person name="Barry K."/>
            <person name="Detter J.C."/>
            <person name="Glavina del Rio T."/>
            <person name="Hammon N."/>
            <person name="Israni S."/>
            <person name="Dalin E."/>
            <person name="Tice H."/>
            <person name="Pitluck S."/>
            <person name="Chain P."/>
            <person name="Malfatti S."/>
            <person name="Shin M."/>
            <person name="Vergez L."/>
            <person name="Schmutz J."/>
            <person name="Larimer F."/>
            <person name="Land M."/>
            <person name="Hauser L."/>
            <person name="Kyrpides N."/>
            <person name="Ivanova N."/>
            <person name="Ward B."/>
            <person name="Arp D."/>
            <person name="Klotz M."/>
            <person name="Stein L."/>
            <person name="O'Mullan G."/>
            <person name="Starkenburg S."/>
            <person name="Sayavedra L."/>
            <person name="Poret-Peterson A.T."/>
            <person name="Gentry M.E."/>
            <person name="Bruce D."/>
            <person name="Richardson P."/>
        </authorList>
    </citation>
    <scope>NUCLEOTIDE SEQUENCE [LARGE SCALE GENOMIC DNA]</scope>
    <source>
        <strain>DSM 10229 / NCIMB 13809 / X14</strain>
    </source>
</reference>
<protein>
    <recommendedName>
        <fullName evidence="1">4-hydroxy-3-methylbut-2-en-1-yl diphosphate synthase (flavodoxin)</fullName>
        <ecNumber evidence="1">1.17.7.3</ecNumber>
    </recommendedName>
    <alternativeName>
        <fullName evidence="1">1-hydroxy-2-methyl-2-(E)-butenyl 4-diphosphate synthase</fullName>
    </alternativeName>
</protein>
<proteinExistence type="inferred from homology"/>
<comment type="function">
    <text evidence="1">Converts 2C-methyl-D-erythritol 2,4-cyclodiphosphate (ME-2,4cPP) into 1-hydroxy-2-methyl-2-(E)-butenyl 4-diphosphate.</text>
</comment>
<comment type="catalytic activity">
    <reaction evidence="1">
        <text>(2E)-4-hydroxy-3-methylbut-2-enyl diphosphate + oxidized [flavodoxin] + H2O + 2 H(+) = 2-C-methyl-D-erythritol 2,4-cyclic diphosphate + reduced [flavodoxin]</text>
        <dbReference type="Rhea" id="RHEA:43604"/>
        <dbReference type="Rhea" id="RHEA-COMP:10622"/>
        <dbReference type="Rhea" id="RHEA-COMP:10623"/>
        <dbReference type="ChEBI" id="CHEBI:15377"/>
        <dbReference type="ChEBI" id="CHEBI:15378"/>
        <dbReference type="ChEBI" id="CHEBI:57618"/>
        <dbReference type="ChEBI" id="CHEBI:58210"/>
        <dbReference type="ChEBI" id="CHEBI:58483"/>
        <dbReference type="ChEBI" id="CHEBI:128753"/>
        <dbReference type="EC" id="1.17.7.3"/>
    </reaction>
</comment>
<comment type="cofactor">
    <cofactor evidence="1">
        <name>[4Fe-4S] cluster</name>
        <dbReference type="ChEBI" id="CHEBI:49883"/>
    </cofactor>
    <text evidence="1">Binds 1 [4Fe-4S] cluster.</text>
</comment>
<comment type="pathway">
    <text evidence="1">Isoprenoid biosynthesis; isopentenyl diphosphate biosynthesis via DXP pathway; isopentenyl diphosphate from 1-deoxy-D-xylulose 5-phosphate: step 5/6.</text>
</comment>
<comment type="similarity">
    <text evidence="1">Belongs to the IspG family.</text>
</comment>
<accession>Q1QQI9</accession>
<evidence type="ECO:0000255" key="1">
    <source>
        <dbReference type="HAMAP-Rule" id="MF_00159"/>
    </source>
</evidence>
<evidence type="ECO:0000256" key="2">
    <source>
        <dbReference type="SAM" id="MobiDB-lite"/>
    </source>
</evidence>
<gene>
    <name evidence="1" type="primary">ispG</name>
    <name type="ordered locus">Nham_0620</name>
</gene>
<feature type="chain" id="PRO_1000011488" description="4-hydroxy-3-methylbut-2-en-1-yl diphosphate synthase (flavodoxin)">
    <location>
        <begin position="1"/>
        <end position="431"/>
    </location>
</feature>
<feature type="region of interest" description="Disordered" evidence="2">
    <location>
        <begin position="1"/>
        <end position="21"/>
    </location>
</feature>
<feature type="binding site" evidence="1">
    <location>
        <position position="310"/>
    </location>
    <ligand>
        <name>[4Fe-4S] cluster</name>
        <dbReference type="ChEBI" id="CHEBI:49883"/>
    </ligand>
</feature>
<feature type="binding site" evidence="1">
    <location>
        <position position="313"/>
    </location>
    <ligand>
        <name>[4Fe-4S] cluster</name>
        <dbReference type="ChEBI" id="CHEBI:49883"/>
    </ligand>
</feature>
<feature type="binding site" evidence="1">
    <location>
        <position position="356"/>
    </location>
    <ligand>
        <name>[4Fe-4S] cluster</name>
        <dbReference type="ChEBI" id="CHEBI:49883"/>
    </ligand>
</feature>
<feature type="binding site" evidence="1">
    <location>
        <position position="363"/>
    </location>
    <ligand>
        <name>[4Fe-4S] cluster</name>
        <dbReference type="ChEBI" id="CHEBI:49883"/>
    </ligand>
</feature>
<name>ISPG_NITHX</name>